<keyword id="KW-0007">Acetylation</keyword>
<keyword id="KW-0010">Activator</keyword>
<keyword id="KW-0013">ADP-ribosylation</keyword>
<keyword id="KW-0067">ATP-binding</keyword>
<keyword id="KW-0158">Chromosome</keyword>
<keyword id="KW-0963">Cytoplasm</keyword>
<keyword id="KW-0227">DNA damage</keyword>
<keyword id="KW-0233">DNA recombination</keyword>
<keyword id="KW-0234">DNA repair</keyword>
<keyword id="KW-0238">DNA-binding</keyword>
<keyword id="KW-0347">Helicase</keyword>
<keyword id="KW-0378">Hydrolase</keyword>
<keyword id="KW-0391">Immunity</keyword>
<keyword id="KW-0399">Innate immunity</keyword>
<keyword id="KW-1017">Isopeptide bond</keyword>
<keyword id="KW-0456">Lyase</keyword>
<keyword id="KW-0488">Methylation</keyword>
<keyword id="KW-0511">Multifunctional enzyme</keyword>
<keyword id="KW-0547">Nucleotide-binding</keyword>
<keyword id="KW-0539">Nucleus</keyword>
<keyword id="KW-0597">Phosphoprotein</keyword>
<keyword id="KW-1185">Reference proteome</keyword>
<keyword id="KW-0804">Transcription</keyword>
<keyword id="KW-0805">Transcription regulation</keyword>
<keyword id="KW-0832">Ubl conjugation</keyword>
<reference key="1">
    <citation type="journal article" date="1996" name="Genomics">
        <title>Genomic structure and chromosomal assignment of the mouse Ku70 gene.</title>
        <authorList>
            <person name="Takiguchi Y."/>
            <person name="Kurimasa A."/>
            <person name="Chen F."/>
            <person name="Pardington P.E."/>
            <person name="Kuriyama T."/>
            <person name="Okinaka R.T."/>
            <person name="Moyzis R."/>
            <person name="Chen D.J."/>
        </authorList>
    </citation>
    <scope>NUCLEOTIDE SEQUENCE [GENOMIC DNA]</scope>
    <source>
        <strain>129</strain>
    </source>
</reference>
<reference key="2">
    <citation type="journal article" date="1998" name="J. Biol. Chem.">
        <title>Murine cell line SX9 bearing a mutation in the DNA-PKcs gene exhibits aberrant V(D)J recombination not only in the coding joint but also in the signal joint.</title>
        <authorList>
            <person name="Fukumura R."/>
            <person name="Araki R."/>
            <person name="Fujimori A."/>
            <person name="Mori M."/>
            <person name="Saito T."/>
            <person name="Watanabe F."/>
            <person name="Sarashi M."/>
            <person name="Itsukaichi H."/>
            <person name="Eguch-Kasai K."/>
            <person name="Sato K."/>
            <person name="Tatsumi K."/>
            <person name="Abe M."/>
        </authorList>
    </citation>
    <scope>NUCLEOTIDE SEQUENCE [MRNA]</scope>
    <source>
        <tissue>Mammary carcinoma</tissue>
    </source>
</reference>
<reference key="3">
    <citation type="journal article" date="2001" name="Mamm. Genome">
        <title>High-throughput sequence identification of gene coding variants within alcohol-related QTLs.</title>
        <authorList>
            <person name="Ehringer M.A."/>
            <person name="Thompson J."/>
            <person name="Conroy O."/>
            <person name="Xu Y."/>
            <person name="Yang F."/>
            <person name="Canniff J."/>
            <person name="Beeson M."/>
            <person name="Gordon L."/>
            <person name="Bennett B."/>
            <person name="Johnson T.E."/>
            <person name="Sikela J.M."/>
        </authorList>
    </citation>
    <scope>NUCLEOTIDE SEQUENCE [MRNA]</scope>
    <source>
        <strain>ILS</strain>
        <strain>ISS</strain>
    </source>
</reference>
<reference key="4">
    <citation type="journal article" date="2005" name="Science">
        <title>The transcriptional landscape of the mammalian genome.</title>
        <authorList>
            <person name="Carninci P."/>
            <person name="Kasukawa T."/>
            <person name="Katayama S."/>
            <person name="Gough J."/>
            <person name="Frith M.C."/>
            <person name="Maeda N."/>
            <person name="Oyama R."/>
            <person name="Ravasi T."/>
            <person name="Lenhard B."/>
            <person name="Wells C."/>
            <person name="Kodzius R."/>
            <person name="Shimokawa K."/>
            <person name="Bajic V.B."/>
            <person name="Brenner S.E."/>
            <person name="Batalov S."/>
            <person name="Forrest A.R."/>
            <person name="Zavolan M."/>
            <person name="Davis M.J."/>
            <person name="Wilming L.G."/>
            <person name="Aidinis V."/>
            <person name="Allen J.E."/>
            <person name="Ambesi-Impiombato A."/>
            <person name="Apweiler R."/>
            <person name="Aturaliya R.N."/>
            <person name="Bailey T.L."/>
            <person name="Bansal M."/>
            <person name="Baxter L."/>
            <person name="Beisel K.W."/>
            <person name="Bersano T."/>
            <person name="Bono H."/>
            <person name="Chalk A.M."/>
            <person name="Chiu K.P."/>
            <person name="Choudhary V."/>
            <person name="Christoffels A."/>
            <person name="Clutterbuck D.R."/>
            <person name="Crowe M.L."/>
            <person name="Dalla E."/>
            <person name="Dalrymple B.P."/>
            <person name="de Bono B."/>
            <person name="Della Gatta G."/>
            <person name="di Bernardo D."/>
            <person name="Down T."/>
            <person name="Engstrom P."/>
            <person name="Fagiolini M."/>
            <person name="Faulkner G."/>
            <person name="Fletcher C.F."/>
            <person name="Fukushima T."/>
            <person name="Furuno M."/>
            <person name="Futaki S."/>
            <person name="Gariboldi M."/>
            <person name="Georgii-Hemming P."/>
            <person name="Gingeras T.R."/>
            <person name="Gojobori T."/>
            <person name="Green R.E."/>
            <person name="Gustincich S."/>
            <person name="Harbers M."/>
            <person name="Hayashi Y."/>
            <person name="Hensch T.K."/>
            <person name="Hirokawa N."/>
            <person name="Hill D."/>
            <person name="Huminiecki L."/>
            <person name="Iacono M."/>
            <person name="Ikeo K."/>
            <person name="Iwama A."/>
            <person name="Ishikawa T."/>
            <person name="Jakt M."/>
            <person name="Kanapin A."/>
            <person name="Katoh M."/>
            <person name="Kawasawa Y."/>
            <person name="Kelso J."/>
            <person name="Kitamura H."/>
            <person name="Kitano H."/>
            <person name="Kollias G."/>
            <person name="Krishnan S.P."/>
            <person name="Kruger A."/>
            <person name="Kummerfeld S.K."/>
            <person name="Kurochkin I.V."/>
            <person name="Lareau L.F."/>
            <person name="Lazarevic D."/>
            <person name="Lipovich L."/>
            <person name="Liu J."/>
            <person name="Liuni S."/>
            <person name="McWilliam S."/>
            <person name="Madan Babu M."/>
            <person name="Madera M."/>
            <person name="Marchionni L."/>
            <person name="Matsuda H."/>
            <person name="Matsuzawa S."/>
            <person name="Miki H."/>
            <person name="Mignone F."/>
            <person name="Miyake S."/>
            <person name="Morris K."/>
            <person name="Mottagui-Tabar S."/>
            <person name="Mulder N."/>
            <person name="Nakano N."/>
            <person name="Nakauchi H."/>
            <person name="Ng P."/>
            <person name="Nilsson R."/>
            <person name="Nishiguchi S."/>
            <person name="Nishikawa S."/>
            <person name="Nori F."/>
            <person name="Ohara O."/>
            <person name="Okazaki Y."/>
            <person name="Orlando V."/>
            <person name="Pang K.C."/>
            <person name="Pavan W.J."/>
            <person name="Pavesi G."/>
            <person name="Pesole G."/>
            <person name="Petrovsky N."/>
            <person name="Piazza S."/>
            <person name="Reed J."/>
            <person name="Reid J.F."/>
            <person name="Ring B.Z."/>
            <person name="Ringwald M."/>
            <person name="Rost B."/>
            <person name="Ruan Y."/>
            <person name="Salzberg S.L."/>
            <person name="Sandelin A."/>
            <person name="Schneider C."/>
            <person name="Schoenbach C."/>
            <person name="Sekiguchi K."/>
            <person name="Semple C.A."/>
            <person name="Seno S."/>
            <person name="Sessa L."/>
            <person name="Sheng Y."/>
            <person name="Shibata Y."/>
            <person name="Shimada H."/>
            <person name="Shimada K."/>
            <person name="Silva D."/>
            <person name="Sinclair B."/>
            <person name="Sperling S."/>
            <person name="Stupka E."/>
            <person name="Sugiura K."/>
            <person name="Sultana R."/>
            <person name="Takenaka Y."/>
            <person name="Taki K."/>
            <person name="Tammoja K."/>
            <person name="Tan S.L."/>
            <person name="Tang S."/>
            <person name="Taylor M.S."/>
            <person name="Tegner J."/>
            <person name="Teichmann S.A."/>
            <person name="Ueda H.R."/>
            <person name="van Nimwegen E."/>
            <person name="Verardo R."/>
            <person name="Wei C.L."/>
            <person name="Yagi K."/>
            <person name="Yamanishi H."/>
            <person name="Zabarovsky E."/>
            <person name="Zhu S."/>
            <person name="Zimmer A."/>
            <person name="Hide W."/>
            <person name="Bult C."/>
            <person name="Grimmond S.M."/>
            <person name="Teasdale R.D."/>
            <person name="Liu E.T."/>
            <person name="Brusic V."/>
            <person name="Quackenbush J."/>
            <person name="Wahlestedt C."/>
            <person name="Mattick J.S."/>
            <person name="Hume D.A."/>
            <person name="Kai C."/>
            <person name="Sasaki D."/>
            <person name="Tomaru Y."/>
            <person name="Fukuda S."/>
            <person name="Kanamori-Katayama M."/>
            <person name="Suzuki M."/>
            <person name="Aoki J."/>
            <person name="Arakawa T."/>
            <person name="Iida J."/>
            <person name="Imamura K."/>
            <person name="Itoh M."/>
            <person name="Kato T."/>
            <person name="Kawaji H."/>
            <person name="Kawagashira N."/>
            <person name="Kawashima T."/>
            <person name="Kojima M."/>
            <person name="Kondo S."/>
            <person name="Konno H."/>
            <person name="Nakano K."/>
            <person name="Ninomiya N."/>
            <person name="Nishio T."/>
            <person name="Okada M."/>
            <person name="Plessy C."/>
            <person name="Shibata K."/>
            <person name="Shiraki T."/>
            <person name="Suzuki S."/>
            <person name="Tagami M."/>
            <person name="Waki K."/>
            <person name="Watahiki A."/>
            <person name="Okamura-Oho Y."/>
            <person name="Suzuki H."/>
            <person name="Kawai J."/>
            <person name="Hayashizaki Y."/>
        </authorList>
    </citation>
    <scope>NUCLEOTIDE SEQUENCE [LARGE SCALE MRNA]</scope>
    <source>
        <strain>C57BL/6J</strain>
        <strain>DBA/2J</strain>
        <tissue>Spleen</tissue>
    </source>
</reference>
<reference key="5">
    <citation type="journal article" date="2004" name="Genome Res.">
        <title>The status, quality, and expansion of the NIH full-length cDNA project: the Mammalian Gene Collection (MGC).</title>
        <authorList>
            <consortium name="The MGC Project Team"/>
        </authorList>
    </citation>
    <scope>NUCLEOTIDE SEQUENCE [LARGE SCALE MRNA]</scope>
    <source>
        <tissue>Mammary tumor</tissue>
    </source>
</reference>
<reference key="6">
    <citation type="submission" date="1992-08" db="EMBL/GenBank/DDBJ databases">
        <title>Nucleotide sequence of the 5' region of the murine p70 Ku autoantigen cDNA.</title>
        <authorList>
            <person name="Baughman G.A."/>
            <person name="Nemeth J.E."/>
            <person name="Bourgeois S."/>
        </authorList>
    </citation>
    <scope>NUCLEOTIDE SEQUENCE [MRNA] OF 1-46</scope>
    <source>
        <strain>BALB/cJ</strain>
        <tissue>Thymus</tissue>
    </source>
</reference>
<reference key="7">
    <citation type="journal article" date="1990" name="J. Immunol.">
        <title>Antigenic determinants of the Ku (p70/p80) autoantigen are poorly conserved between species.</title>
        <authorList>
            <person name="Porges A.J."/>
            <person name="Ng T."/>
            <person name="Reeves W.H."/>
        </authorList>
    </citation>
    <scope>NUCLEOTIDE SEQUENCE [MRNA] OF 18-608</scope>
</reference>
<reference key="8">
    <citation type="journal article" date="1996" name="FEBS Lett.">
        <title>Non-histone protein 1 (NHP1) is a member of the Ku protein family which is upregulated in differentiating mouse myoblasts and human promyelocytes.</title>
        <authorList>
            <person name="Oderwald H."/>
            <person name="Hughes M.J."/>
            <person name="Jost J.-P."/>
        </authorList>
    </citation>
    <scope>DEVELOPMENTAL STAGE</scope>
</reference>
<reference key="9">
    <citation type="journal article" date="2002" name="J. Biol. Chem.">
        <title>Regulation of osteocalcin gene expression by a novel Ku antigen transcription factor complex.</title>
        <authorList>
            <person name="Willis D.M."/>
            <person name="Loewy A.P."/>
            <person name="Charlton-Kachigian N."/>
            <person name="Shao J.-S."/>
            <person name="Ornitz D.M."/>
            <person name="Towler D.A."/>
        </authorList>
    </citation>
    <scope>FUNCTION</scope>
    <source>
        <tissue>Osteoblast</tissue>
    </source>
</reference>
<reference key="10">
    <citation type="journal article" date="2003" name="J. Biol. Chem.">
        <title>Synthesis and functional analyses of nuclear clusterin, a cell death protein.</title>
        <authorList>
            <person name="Leskov K.S."/>
            <person name="Klokov D.Y."/>
            <person name="Li J."/>
            <person name="Kinsella T.J."/>
            <person name="Boothman D.A."/>
        </authorList>
    </citation>
    <scope>INTERACTION WITH CLU</scope>
</reference>
<reference key="11">
    <citation type="journal article" date="2010" name="Cell">
        <title>A tissue-specific atlas of mouse protein phosphorylation and expression.</title>
        <authorList>
            <person name="Huttlin E.L."/>
            <person name="Jedrychowski M.P."/>
            <person name="Elias J.E."/>
            <person name="Goswami T."/>
            <person name="Rad R."/>
            <person name="Beausoleil S.A."/>
            <person name="Villen J."/>
            <person name="Haas W."/>
            <person name="Sowa M.E."/>
            <person name="Gygi S.P."/>
        </authorList>
    </citation>
    <scope>IDENTIFICATION BY MASS SPECTROMETRY [LARGE SCALE ANALYSIS]</scope>
    <source>
        <tissue>Kidney</tissue>
        <tissue>Liver</tissue>
        <tissue>Lung</tissue>
        <tissue>Pancreas</tissue>
        <tissue>Spleen</tissue>
        <tissue>Testis</tissue>
    </source>
</reference>
<reference key="12">
    <citation type="journal article" date="2018" name="Mol. Cell">
        <title>MRI is a DNA damage response adaptor during classical non-homologous end joining.</title>
        <authorList>
            <person name="Hung P.J."/>
            <person name="Johnson B."/>
            <person name="Chen B.R."/>
            <person name="Byrum A.K."/>
            <person name="Bredemeyer A.L."/>
            <person name="Yewdell W.T."/>
            <person name="Johnson T.E."/>
            <person name="Lee B.J."/>
            <person name="Deivasigamani S."/>
            <person name="Hindi I."/>
            <person name="Amatya P."/>
            <person name="Gross M.L."/>
            <person name="Paull T.T."/>
            <person name="Pisapia D.J."/>
            <person name="Chaudhuri J."/>
            <person name="Petrini J.J.H."/>
            <person name="Mosammaparast N."/>
            <person name="Amarasinghe G.K."/>
            <person name="Zha S."/>
            <person name="Tyler J.K."/>
            <person name="Sleckman B.P."/>
        </authorList>
    </citation>
    <scope>INTERACTION WITH CYREN</scope>
</reference>
<reference key="13">
    <citation type="journal article" date="2020" name="Nature">
        <title>DNA-PKcs has KU-dependent function in rRNA processing and haematopoiesis.</title>
        <authorList>
            <person name="Shao Z."/>
            <person name="Flynn R.A."/>
            <person name="Crowe J.L."/>
            <person name="Zhu Y."/>
            <person name="Liang J."/>
            <person name="Jiang W."/>
            <person name="Aryan F."/>
            <person name="Aoude P."/>
            <person name="Bertozzi C.R."/>
            <person name="Estes V.M."/>
            <person name="Lee B.J."/>
            <person name="Bhagat G."/>
            <person name="Zha S."/>
            <person name="Calo E."/>
        </authorList>
    </citation>
    <scope>DISRUPTION PHENOTYPE</scope>
</reference>
<reference key="14">
    <citation type="journal article" date="2004" name="Mol. Cell">
        <title>Acetylation of the C terminus of Ku70 by CBP and PCAF controls Bax-mediated apoptosis.</title>
        <authorList>
            <person name="Cohen H.Y."/>
            <person name="Lavu S."/>
            <person name="Bitterman K.J."/>
            <person name="Hekking B."/>
            <person name="Imahiyerobo T.A."/>
            <person name="Miller C."/>
            <person name="Frye R."/>
            <person name="Ploegh H."/>
            <person name="Kessler B.M."/>
            <person name="Sinclair D.A."/>
        </authorList>
    </citation>
    <scope>FUNCTION</scope>
</reference>
<reference key="15">
    <citation type="journal article" date="2020" name="Cell Res.">
        <title>ERCC6L2 promotes DNA orientation-specific recombination in mammalian cells.</title>
        <authorList>
            <person name="Liu X."/>
            <person name="Liu T."/>
            <person name="Shang Y."/>
            <person name="Dai P."/>
            <person name="Zhang W."/>
            <person name="Lee B.J."/>
            <person name="Huang M."/>
            <person name="Yang D."/>
            <person name="Wu Q."/>
            <person name="Liu L.D."/>
            <person name="Zheng X."/>
            <person name="Zhou B.O."/>
            <person name="Dong J."/>
            <person name="Yeap L.S."/>
            <person name="Hu J."/>
            <person name="Xiao T."/>
            <person name="Zha S."/>
            <person name="Casellas R."/>
            <person name="Liu X.S."/>
            <person name="Meng F.L."/>
        </authorList>
    </citation>
    <scope>INTERACTION WITH ERCC6L2</scope>
</reference>
<reference key="16">
    <citation type="journal article" date="2022" name="Cell Rep.">
        <title>SETD4-mediated KU70 methylation suppresses apoptosis.</title>
        <authorList>
            <person name="Wang Y."/>
            <person name="Liu B."/>
            <person name="Lu H."/>
            <person name="Liu J."/>
            <person name="Romanienko P.J."/>
            <person name="Montelione G.T."/>
            <person name="Shen Z."/>
        </authorList>
    </citation>
    <scope>FUNCTION</scope>
    <scope>MUTAGENESIS OF LYS-568</scope>
</reference>
<organism>
    <name type="scientific">Mus musculus</name>
    <name type="common">Mouse</name>
    <dbReference type="NCBI Taxonomy" id="10090"/>
    <lineage>
        <taxon>Eukaryota</taxon>
        <taxon>Metazoa</taxon>
        <taxon>Chordata</taxon>
        <taxon>Craniata</taxon>
        <taxon>Vertebrata</taxon>
        <taxon>Euteleostomi</taxon>
        <taxon>Mammalia</taxon>
        <taxon>Eutheria</taxon>
        <taxon>Euarchontoglires</taxon>
        <taxon>Glires</taxon>
        <taxon>Rodentia</taxon>
        <taxon>Myomorpha</taxon>
        <taxon>Muroidea</taxon>
        <taxon>Muridae</taxon>
        <taxon>Murinae</taxon>
        <taxon>Mus</taxon>
        <taxon>Mus</taxon>
    </lineage>
</organism>
<gene>
    <name type="primary">Xrcc6</name>
    <name type="synonym">G22p1</name>
    <name type="synonym">Ku70</name>
</gene>
<name>XRCC6_MOUSE</name>
<evidence type="ECO:0000250" key="1"/>
<evidence type="ECO:0000250" key="2">
    <source>
        <dbReference type="UniProtKB" id="P12956"/>
    </source>
</evidence>
<evidence type="ECO:0000255" key="3">
    <source>
        <dbReference type="PROSITE-ProRule" id="PRU00186"/>
    </source>
</evidence>
<evidence type="ECO:0000256" key="4">
    <source>
        <dbReference type="SAM" id="MobiDB-lite"/>
    </source>
</evidence>
<evidence type="ECO:0000269" key="5">
    <source>
    </source>
</evidence>
<evidence type="ECO:0000269" key="6">
    <source>
    </source>
</evidence>
<evidence type="ECO:0000269" key="7">
    <source>
    </source>
</evidence>
<evidence type="ECO:0000269" key="8">
    <source>
    </source>
</evidence>
<evidence type="ECO:0000269" key="9">
    <source>
    </source>
</evidence>
<evidence type="ECO:0000269" key="10">
    <source>
    </source>
</evidence>
<evidence type="ECO:0000269" key="11">
    <source>
    </source>
</evidence>
<evidence type="ECO:0000269" key="12">
    <source>
    </source>
</evidence>
<evidence type="ECO:0000305" key="13"/>
<sequence length="608" mass="69484">MSEWESYYKTEGEEEEEEEESPDTGGEYKYSGRDSLIFLVDASRAMFESQGEDELTPFDMSIQCIQSVYTSKIISSDRDLLAVVFYGTEKDKNSVNFKNIYVLQDLDNPGAKRVLELDQFKGQQGKKHFRDTVGHGSDYSLSEVLWVCANLFSDVQLKMSHKRIMLFTNEDDPHGRDSAKASRARTKASDLRDTGIFLDLMHLKKPGGFDVSVFYRDIITTAEDEDLGVHFEESSKLEDLLRKVRAKETKKRVLSRLKFKLGEDVVLMVGIYNLVQKANKPFPVRLYRETNEPVKTKTRTFNVNTGSLLLPSDTKRSLTYGTRQIVLEKEETEELKRFDEPGLILMGFKPTVMLKKQHYLRPSLFVYPEESLVSGSSTLFSALLTKCVEKKVIAVCRYTPRKNVSPYFVALVPQEEELDDQNIQVTPGGFQLVFLPYADDKRKVPFTEKVTANQEQIDKMKAIVQKLRFTYRSDSFENPVLQQHFRNLEALALDMMESEQVVDLTLPKVEAIKKRLGSLADEFKELVYPPGYNPEGKVAKRKQDDEGSTSKKPKVELSEEELKAHFRKGTLGKLTVPTLKDICKAHGLKSGPKKQELLDALIRHLEKN</sequence>
<protein>
    <recommendedName>
        <fullName>X-ray repair cross-complementing protein 6</fullName>
        <ecNumber>3.6.4.-</ecNumber>
        <ecNumber>4.2.99.-</ecNumber>
    </recommendedName>
    <alternativeName>
        <fullName>5'-deoxyribose-5-phosphate lyase Ku70</fullName>
        <shortName>5'-dRP/AP lyase Ku70</shortName>
    </alternativeName>
    <alternativeName>
        <fullName>ATP-dependent DNA helicase 2 subunit 1</fullName>
    </alternativeName>
    <alternativeName>
        <fullName>ATP-dependent DNA helicase II 70 kDa subunit</fullName>
    </alternativeName>
    <alternativeName>
        <fullName>CTC box-binding factor 75 kDa subunit</fullName>
        <shortName>CTC75</shortName>
        <shortName>CTCBF</shortName>
    </alternativeName>
    <alternativeName>
        <fullName>DNA repair protein XRCC6</fullName>
    </alternativeName>
    <alternativeName>
        <fullName>Ku autoantigen protein p70 homolog</fullName>
        <shortName>Ku70</shortName>
    </alternativeName>
</protein>
<dbReference type="EC" id="3.6.4.-"/>
<dbReference type="EC" id="4.2.99.-"/>
<dbReference type="EMBL" id="U50378">
    <property type="protein sequence ID" value="AAC52675.1"/>
    <property type="molecule type" value="Genomic_DNA"/>
</dbReference>
<dbReference type="EMBL" id="U50367">
    <property type="protein sequence ID" value="AAC52675.1"/>
    <property type="status" value="JOINED"/>
    <property type="molecule type" value="Genomic_DNA"/>
</dbReference>
<dbReference type="EMBL" id="U50368">
    <property type="protein sequence ID" value="AAC52675.1"/>
    <property type="status" value="JOINED"/>
    <property type="molecule type" value="Genomic_DNA"/>
</dbReference>
<dbReference type="EMBL" id="U50369">
    <property type="protein sequence ID" value="AAC52675.1"/>
    <property type="status" value="JOINED"/>
    <property type="molecule type" value="Genomic_DNA"/>
</dbReference>
<dbReference type="EMBL" id="U50370">
    <property type="protein sequence ID" value="AAC52675.1"/>
    <property type="status" value="JOINED"/>
    <property type="molecule type" value="Genomic_DNA"/>
</dbReference>
<dbReference type="EMBL" id="U50371">
    <property type="protein sequence ID" value="AAC52675.1"/>
    <property type="status" value="JOINED"/>
    <property type="molecule type" value="Genomic_DNA"/>
</dbReference>
<dbReference type="EMBL" id="U50372">
    <property type="protein sequence ID" value="AAC52675.1"/>
    <property type="status" value="JOINED"/>
    <property type="molecule type" value="Genomic_DNA"/>
</dbReference>
<dbReference type="EMBL" id="U50373">
    <property type="protein sequence ID" value="AAC52675.1"/>
    <property type="status" value="JOINED"/>
    <property type="molecule type" value="Genomic_DNA"/>
</dbReference>
<dbReference type="EMBL" id="U50374">
    <property type="protein sequence ID" value="AAC52675.1"/>
    <property type="status" value="JOINED"/>
    <property type="molecule type" value="Genomic_DNA"/>
</dbReference>
<dbReference type="EMBL" id="U50375">
    <property type="protein sequence ID" value="AAC52675.1"/>
    <property type="status" value="JOINED"/>
    <property type="molecule type" value="Genomic_DNA"/>
</dbReference>
<dbReference type="EMBL" id="U50376">
    <property type="protein sequence ID" value="AAC52675.1"/>
    <property type="status" value="JOINED"/>
    <property type="molecule type" value="Genomic_DNA"/>
</dbReference>
<dbReference type="EMBL" id="U50377">
    <property type="protein sequence ID" value="AAC52675.1"/>
    <property type="status" value="JOINED"/>
    <property type="molecule type" value="Genomic_DNA"/>
</dbReference>
<dbReference type="EMBL" id="U34878">
    <property type="protein sequence ID" value="AAC53575.1"/>
    <property type="molecule type" value="Genomic_DNA"/>
</dbReference>
<dbReference type="EMBL" id="AB010282">
    <property type="protein sequence ID" value="BAA28874.1"/>
    <property type="molecule type" value="mRNA"/>
</dbReference>
<dbReference type="EMBL" id="AF483500">
    <property type="protein sequence ID" value="AAL90774.1"/>
    <property type="molecule type" value="mRNA"/>
</dbReference>
<dbReference type="EMBL" id="AF483501">
    <property type="protein sequence ID" value="AAL90775.1"/>
    <property type="molecule type" value="mRNA"/>
</dbReference>
<dbReference type="EMBL" id="AK143570">
    <property type="protein sequence ID" value="BAE25441.1"/>
    <property type="molecule type" value="mRNA"/>
</dbReference>
<dbReference type="EMBL" id="AK146392">
    <property type="protein sequence ID" value="BAE27135.1"/>
    <property type="molecule type" value="mRNA"/>
</dbReference>
<dbReference type="EMBL" id="AK146394">
    <property type="protein sequence ID" value="BAE27137.1"/>
    <property type="molecule type" value="mRNA"/>
</dbReference>
<dbReference type="EMBL" id="AK146396">
    <property type="protein sequence ID" value="BAE27139.1"/>
    <property type="molecule type" value="mRNA"/>
</dbReference>
<dbReference type="EMBL" id="BC031422">
    <property type="protein sequence ID" value="AAH31422.1"/>
    <property type="molecule type" value="mRNA"/>
</dbReference>
<dbReference type="EMBL" id="Z14157">
    <property type="protein sequence ID" value="CAA78526.1"/>
    <property type="molecule type" value="mRNA"/>
</dbReference>
<dbReference type="EMBL" id="M38700">
    <property type="protein sequence ID" value="AAA39396.1"/>
    <property type="molecule type" value="mRNA"/>
</dbReference>
<dbReference type="CCDS" id="CCDS37153.1"/>
<dbReference type="PIR" id="A43534">
    <property type="entry name" value="A43534"/>
</dbReference>
<dbReference type="PIR" id="S25149">
    <property type="entry name" value="S25149"/>
</dbReference>
<dbReference type="RefSeq" id="NP_034377.2">
    <property type="nucleotide sequence ID" value="NM_010247.2"/>
</dbReference>
<dbReference type="RefSeq" id="XP_006520505.1">
    <property type="nucleotide sequence ID" value="XM_006520442.3"/>
</dbReference>
<dbReference type="RefSeq" id="XP_006520506.1">
    <property type="nucleotide sequence ID" value="XM_006520443.3"/>
</dbReference>
<dbReference type="RefSeq" id="XP_011243758.1">
    <property type="nucleotide sequence ID" value="XM_011245456.2"/>
</dbReference>
<dbReference type="SMR" id="P23475"/>
<dbReference type="BioGRID" id="199785">
    <property type="interactions" value="24"/>
</dbReference>
<dbReference type="ComplexPortal" id="CPX-2047">
    <property type="entry name" value="Ku70:Ku80 complex"/>
</dbReference>
<dbReference type="CORUM" id="P23475"/>
<dbReference type="FunCoup" id="P23475">
    <property type="interactions" value="2719"/>
</dbReference>
<dbReference type="IntAct" id="P23475">
    <property type="interactions" value="7"/>
</dbReference>
<dbReference type="MINT" id="P23475"/>
<dbReference type="STRING" id="10090.ENSMUSP00000097968"/>
<dbReference type="GlyGen" id="P23475">
    <property type="glycosylation" value="1 site"/>
</dbReference>
<dbReference type="iPTMnet" id="P23475"/>
<dbReference type="PhosphoSitePlus" id="P23475"/>
<dbReference type="jPOST" id="P23475"/>
<dbReference type="PaxDb" id="10090-ENSMUSP00000068559"/>
<dbReference type="PeptideAtlas" id="P23475"/>
<dbReference type="ProteomicsDB" id="299724"/>
<dbReference type="Pumba" id="P23475"/>
<dbReference type="DNASU" id="14375"/>
<dbReference type="GeneID" id="14375"/>
<dbReference type="KEGG" id="mmu:14375"/>
<dbReference type="UCSC" id="uc007wxy.1">
    <property type="organism name" value="mouse"/>
</dbReference>
<dbReference type="AGR" id="MGI:95606"/>
<dbReference type="CTD" id="2547"/>
<dbReference type="MGI" id="MGI:95606">
    <property type="gene designation" value="Xrcc6"/>
</dbReference>
<dbReference type="eggNOG" id="KOG2327">
    <property type="taxonomic scope" value="Eukaryota"/>
</dbReference>
<dbReference type="InParanoid" id="P23475"/>
<dbReference type="OrthoDB" id="3249161at2759"/>
<dbReference type="TreeFam" id="TF315101"/>
<dbReference type="Reactome" id="R-MMU-5693571">
    <property type="pathway name" value="Nonhomologous End-Joining (NHEJ)"/>
</dbReference>
<dbReference type="Reactome" id="R-MMU-6798695">
    <property type="pathway name" value="Neutrophil degranulation"/>
</dbReference>
<dbReference type="BioGRID-ORCS" id="14375">
    <property type="hits" value="28 hits in 115 CRISPR screens"/>
</dbReference>
<dbReference type="CD-CODE" id="01CA17F3">
    <property type="entry name" value="Centrosome"/>
</dbReference>
<dbReference type="ChiTaRS" id="Xrcc6">
    <property type="organism name" value="mouse"/>
</dbReference>
<dbReference type="PRO" id="PR:P23475"/>
<dbReference type="Proteomes" id="UP000000589">
    <property type="component" value="Unplaced"/>
</dbReference>
<dbReference type="RNAct" id="P23475">
    <property type="molecule type" value="protein"/>
</dbReference>
<dbReference type="GO" id="GO:0005694">
    <property type="term" value="C:chromosome"/>
    <property type="evidence" value="ECO:0007669"/>
    <property type="project" value="UniProtKB-SubCell"/>
</dbReference>
<dbReference type="GO" id="GO:0005737">
    <property type="term" value="C:cytoplasm"/>
    <property type="evidence" value="ECO:0000314"/>
    <property type="project" value="MGI"/>
</dbReference>
<dbReference type="GO" id="GO:0070418">
    <property type="term" value="C:DNA-dependent protein kinase complex"/>
    <property type="evidence" value="ECO:0000266"/>
    <property type="project" value="ComplexPortal"/>
</dbReference>
<dbReference type="GO" id="GO:0005958">
    <property type="term" value="C:DNA-dependent protein kinase-DNA ligase 4 complex"/>
    <property type="evidence" value="ECO:0000250"/>
    <property type="project" value="UniProtKB"/>
</dbReference>
<dbReference type="GO" id="GO:0043564">
    <property type="term" value="C:Ku70:Ku80 complex"/>
    <property type="evidence" value="ECO:0000250"/>
    <property type="project" value="UniProtKB"/>
</dbReference>
<dbReference type="GO" id="GO:0070419">
    <property type="term" value="C:nonhomologous end joining complex"/>
    <property type="evidence" value="ECO:0000250"/>
    <property type="project" value="UniProtKB"/>
</dbReference>
<dbReference type="GO" id="GO:0005634">
    <property type="term" value="C:nucleus"/>
    <property type="evidence" value="ECO:0000314"/>
    <property type="project" value="MGI"/>
</dbReference>
<dbReference type="GO" id="GO:0051575">
    <property type="term" value="F:5'-deoxyribose-5-phosphate lyase activity"/>
    <property type="evidence" value="ECO:0000250"/>
    <property type="project" value="UniProtKB"/>
</dbReference>
<dbReference type="GO" id="GO:0005524">
    <property type="term" value="F:ATP binding"/>
    <property type="evidence" value="ECO:0007669"/>
    <property type="project" value="UniProtKB-KW"/>
</dbReference>
<dbReference type="GO" id="GO:0003684">
    <property type="term" value="F:damaged DNA binding"/>
    <property type="evidence" value="ECO:0007669"/>
    <property type="project" value="InterPro"/>
</dbReference>
<dbReference type="GO" id="GO:0003678">
    <property type="term" value="F:DNA helicase activity"/>
    <property type="evidence" value="ECO:0007669"/>
    <property type="project" value="InterPro"/>
</dbReference>
<dbReference type="GO" id="GO:0003690">
    <property type="term" value="F:double-stranded DNA binding"/>
    <property type="evidence" value="ECO:0000314"/>
    <property type="project" value="MGI"/>
</dbReference>
<dbReference type="GO" id="GO:0016787">
    <property type="term" value="F:hydrolase activity"/>
    <property type="evidence" value="ECO:0007669"/>
    <property type="project" value="UniProtKB-KW"/>
</dbReference>
<dbReference type="GO" id="GO:0042162">
    <property type="term" value="F:telomeric DNA binding"/>
    <property type="evidence" value="ECO:0007669"/>
    <property type="project" value="InterPro"/>
</dbReference>
<dbReference type="GO" id="GO:0071480">
    <property type="term" value="P:cellular response to gamma radiation"/>
    <property type="evidence" value="ECO:0000250"/>
    <property type="project" value="UniProtKB"/>
</dbReference>
<dbReference type="GO" id="GO:0006974">
    <property type="term" value="P:DNA damage response"/>
    <property type="evidence" value="ECO:0000315"/>
    <property type="project" value="MGI"/>
</dbReference>
<dbReference type="GO" id="GO:0006302">
    <property type="term" value="P:double-strand break repair"/>
    <property type="evidence" value="ECO:0000315"/>
    <property type="project" value="MGI"/>
</dbReference>
<dbReference type="GO" id="GO:0006303">
    <property type="term" value="P:double-strand break repair via nonhomologous end joining"/>
    <property type="evidence" value="ECO:0000315"/>
    <property type="project" value="MGI"/>
</dbReference>
<dbReference type="GO" id="GO:0045087">
    <property type="term" value="P:innate immune response"/>
    <property type="evidence" value="ECO:0007669"/>
    <property type="project" value="UniProtKB-KW"/>
</dbReference>
<dbReference type="GO" id="GO:0045892">
    <property type="term" value="P:negative regulation of DNA-templated transcription"/>
    <property type="evidence" value="ECO:0000250"/>
    <property type="project" value="UniProtKB"/>
</dbReference>
<dbReference type="GO" id="GO:0022008">
    <property type="term" value="P:neurogenesis"/>
    <property type="evidence" value="ECO:0000315"/>
    <property type="project" value="MGI"/>
</dbReference>
<dbReference type="GO" id="GO:0045621">
    <property type="term" value="P:positive regulation of lymphocyte differentiation"/>
    <property type="evidence" value="ECO:0000315"/>
    <property type="project" value="UniProtKB"/>
</dbReference>
<dbReference type="GO" id="GO:0050769">
    <property type="term" value="P:positive regulation of neurogenesis"/>
    <property type="evidence" value="ECO:0000315"/>
    <property type="project" value="MGI"/>
</dbReference>
<dbReference type="GO" id="GO:0000725">
    <property type="term" value="P:recombinational repair"/>
    <property type="evidence" value="ECO:0000303"/>
    <property type="project" value="ComplexPortal"/>
</dbReference>
<dbReference type="GO" id="GO:0048660">
    <property type="term" value="P:regulation of smooth muscle cell proliferation"/>
    <property type="evidence" value="ECO:0000250"/>
    <property type="project" value="UniProtKB"/>
</dbReference>
<dbReference type="GO" id="GO:0010212">
    <property type="term" value="P:response to ionizing radiation"/>
    <property type="evidence" value="ECO:0000315"/>
    <property type="project" value="MGI"/>
</dbReference>
<dbReference type="GO" id="GO:0000723">
    <property type="term" value="P:telomere maintenance"/>
    <property type="evidence" value="ECO:0007669"/>
    <property type="project" value="InterPro"/>
</dbReference>
<dbReference type="GO" id="GO:0033151">
    <property type="term" value="P:V(D)J recombination"/>
    <property type="evidence" value="ECO:0000315"/>
    <property type="project" value="MGI"/>
</dbReference>
<dbReference type="CDD" id="cd00788">
    <property type="entry name" value="KU70"/>
    <property type="match status" value="1"/>
</dbReference>
<dbReference type="CDD" id="cd01458">
    <property type="entry name" value="vWA_ku"/>
    <property type="match status" value="1"/>
</dbReference>
<dbReference type="FunFam" id="1.10.720.30:FF:000007">
    <property type="entry name" value="X-ray repair cross complementing 6"/>
    <property type="match status" value="1"/>
</dbReference>
<dbReference type="FunFam" id="2.40.290.10:FF:000010">
    <property type="entry name" value="X-ray repair cross-complementing protein 6"/>
    <property type="match status" value="1"/>
</dbReference>
<dbReference type="FunFam" id="3.40.50.410:FF:000031">
    <property type="entry name" value="X-ray repair cross-complementing protein 6 isoform X1"/>
    <property type="match status" value="1"/>
</dbReference>
<dbReference type="FunFam" id="4.10.970.10:FF:000001">
    <property type="entry name" value="X-ray repair cross-complementing protein 6 isoform X1"/>
    <property type="match status" value="1"/>
</dbReference>
<dbReference type="FunFam" id="1.10.1600.10:FF:000001">
    <property type="entry name" value="X-ray repair cross-complementing protein 6 isoform X2"/>
    <property type="match status" value="1"/>
</dbReference>
<dbReference type="Gene3D" id="1.10.1600.10">
    <property type="match status" value="1"/>
</dbReference>
<dbReference type="Gene3D" id="2.40.290.10">
    <property type="match status" value="1"/>
</dbReference>
<dbReference type="Gene3D" id="4.10.970.10">
    <property type="entry name" value="Ku70, bridge and pillars"/>
    <property type="match status" value="1"/>
</dbReference>
<dbReference type="Gene3D" id="1.10.720.30">
    <property type="entry name" value="SAP domain"/>
    <property type="match status" value="1"/>
</dbReference>
<dbReference type="Gene3D" id="3.40.50.410">
    <property type="entry name" value="von Willebrand factor, type A domain"/>
    <property type="match status" value="1"/>
</dbReference>
<dbReference type="InterPro" id="IPR006165">
    <property type="entry name" value="Ku70"/>
</dbReference>
<dbReference type="InterPro" id="IPR006164">
    <property type="entry name" value="Ku70/Ku80_beta-barrel_dom"/>
</dbReference>
<dbReference type="InterPro" id="IPR027388">
    <property type="entry name" value="Ku70_bridge/pillars_dom_sf"/>
</dbReference>
<dbReference type="InterPro" id="IPR047087">
    <property type="entry name" value="KU70_core_dom"/>
</dbReference>
<dbReference type="InterPro" id="IPR005160">
    <property type="entry name" value="Ku_C"/>
</dbReference>
<dbReference type="InterPro" id="IPR005161">
    <property type="entry name" value="Ku_N"/>
</dbReference>
<dbReference type="InterPro" id="IPR003034">
    <property type="entry name" value="SAP_dom"/>
</dbReference>
<dbReference type="InterPro" id="IPR036361">
    <property type="entry name" value="SAP_dom_sf"/>
</dbReference>
<dbReference type="InterPro" id="IPR016194">
    <property type="entry name" value="SPOC-like_C_dom_sf"/>
</dbReference>
<dbReference type="InterPro" id="IPR036465">
    <property type="entry name" value="vWFA_dom_sf"/>
</dbReference>
<dbReference type="NCBIfam" id="TIGR00578">
    <property type="entry name" value="ku70"/>
    <property type="match status" value="1"/>
</dbReference>
<dbReference type="PANTHER" id="PTHR12604">
    <property type="entry name" value="KU AUTOANTIGEN DNA HELICASE"/>
    <property type="match status" value="1"/>
</dbReference>
<dbReference type="PANTHER" id="PTHR12604:SF2">
    <property type="entry name" value="X-RAY REPAIR CROSS-COMPLEMENTING PROTEIN 6"/>
    <property type="match status" value="1"/>
</dbReference>
<dbReference type="Pfam" id="PF02735">
    <property type="entry name" value="Ku"/>
    <property type="match status" value="1"/>
</dbReference>
<dbReference type="Pfam" id="PF03730">
    <property type="entry name" value="Ku_C"/>
    <property type="match status" value="1"/>
</dbReference>
<dbReference type="Pfam" id="PF03731">
    <property type="entry name" value="Ku_N"/>
    <property type="match status" value="1"/>
</dbReference>
<dbReference type="Pfam" id="PF02037">
    <property type="entry name" value="SAP"/>
    <property type="match status" value="1"/>
</dbReference>
<dbReference type="PIRSF" id="PIRSF003033">
    <property type="entry name" value="Ku70"/>
    <property type="match status" value="1"/>
</dbReference>
<dbReference type="SMART" id="SM00559">
    <property type="entry name" value="Ku78"/>
    <property type="match status" value="1"/>
</dbReference>
<dbReference type="SMART" id="SM00513">
    <property type="entry name" value="SAP"/>
    <property type="match status" value="1"/>
</dbReference>
<dbReference type="SUPFAM" id="SSF68906">
    <property type="entry name" value="SAP domain"/>
    <property type="match status" value="1"/>
</dbReference>
<dbReference type="SUPFAM" id="SSF100939">
    <property type="entry name" value="SPOC domain-like"/>
    <property type="match status" value="1"/>
</dbReference>
<dbReference type="SUPFAM" id="SSF53300">
    <property type="entry name" value="vWA-like"/>
    <property type="match status" value="1"/>
</dbReference>
<dbReference type="PROSITE" id="PS50800">
    <property type="entry name" value="SAP"/>
    <property type="match status" value="1"/>
</dbReference>
<comment type="function">
    <text evidence="2 5 7 11">Single-stranded DNA-dependent ATP-dependent helicase that plays a key role in DNA non-homologous end joining (NHEJ) by recruiting DNA-PK to DNA (By similarity). Required for double-strand break repair and V(D)J recombination (By similarity). Also has a role in chromosome translocation (By similarity). Has a role in chromosome translocation (By similarity). The DNA helicase II complex binds preferentially to fork-like ends of double-stranded DNA in a cell cycle-dependent manner (By similarity). It works in the 3'-5' direction (By similarity). During NHEJ, the XRCC5-XRRC6 dimer performs the recognition step: it recognizes and binds to the broken ends of the DNA and protects them from further resection (By similarity). Binding to DNA may be mediated by XRCC6 (By similarity). The XRCC5-XRRC6 dimer acts as a regulatory subunit of the DNA-dependent protein kinase complex DNA-PK by increasing the affinity of the catalytic subunit PRKDC to DNA by 100-fold (By similarity). The XRCC5-XRRC6 dimer is probably involved in stabilizing broken DNA ends and bringing them together (By similarity). The assembly of the DNA-PK complex to DNA ends is required for the NHEJ ligation step (By similarity). Probably also acts as a 5'-deoxyribose-5-phosphate lyase (5'-dRP lyase), by catalyzing the beta-elimination of the 5' deoxyribose-5-phosphate at an abasic site near double-strand breaks (By similarity). 5'-dRP lyase activity allows to 'clean' the termini of abasic sites, a class of nucleotide damage commonly associated with strand breaks, before such broken ends can be joined (By similarity). The XRCC5-XRRC6 dimer together with APEX1 acts as a negative regulator of transcription (By similarity). In association with NAA15, the XRCC5-XRRC6 dimer binds to the osteocalcin promoter and activates osteocalcin expression (PubMed:12145306). Plays a role in the regulation of DNA virus-mediated innate immune response by assembling into the HDP-RNP complex, a complex that serves as a platform for IRF3 phosphorylation and subsequent innate immune response activation through the cGAS-STING pathway (By similarity). Negatively regulates apoptosis by interacting with BAX and sequestering it from the mitochondria (PubMed:15023334, PubMed:35545041). Might have deubiquitination activity, acting on BAX (By similarity).</text>
</comment>
<comment type="subunit">
    <text evidence="2 6 7 8 10">Heterodimer composed of XRCC5/Ku80 and XRCC6/Ku70 (By similarity). Component of the core long-range non-homologous end joining (NHEJ) complex (also named DNA-PK complex) composed of PRKDC, LIG4, XRCC4, XRCC6/Ku70, XRCC5/Ku86 and NHEJ1/XLF (By similarity). Additional component of the NHEJ complex includes PAXX (By similarity). Following autophosphorylation, PRKDC dissociates from DNA, leading to formation of the short-range NHEJ complex, composed of LIG4, XRCC4, XRCC6/Ku70, XRCC5/Ku86 and NHEJ1/XLF (By similarity). The XRCC5-XRCC6 dimer also associates with NAA15, and this complex binds to the osteocalcin promoter and activates osteocalcin expression (By similarity). In addition, XRCC6 interacts with the osteoblast-specific transcription factors MSX2, RUNX2 and DLX5 (By similarity). Interacts with ELF3 (By similarity). Interacts with ATP23 (By similarity). The XRCC5-XRRC6 dimer associates in a DNA-dependent manner with APEX1 (By similarity). Binds to CDK9 (By similarity). Identified in a complex with DEAF1 and XRCC5 (By similarity). Interacts with DEAF1 (via the SAND domain); the interaction is direct and may be inhibited by DNA-binding (By similarity). Interacts with CLU (PubMed:12551933). Interacts with NR4A3; the DNA-dependent protein kinase complex DNA-PK phosphorylates and activates NR4A3 and prevents NR4A3 ubiquitinylation and degradation (By similarity). Interacts with CYREN (via KBM motif) (PubMed:30017584). Interacts (via N-terminus) with HSF1 (via N-terminus); this interaction is direct and prevents XRCC5/XRCC6 heterodimeric binding and non-homologous end joining (NHEJ) repair activities induced by ionizing radiation (IR) (By similarity). Part of the HDP-RNP complex composed of at least HEXIM1, PRKDC, XRCC5, XRCC6, paraspeckle proteins (SFPQ, NONO, PSPC1, RBM14, and MATR3) and NEAT1 RNA (By similarity). Interacts with HMBOX1 (By similarity). Interacts with ATF7 (By similarity). Interacts with APLF (via KBM motif) (By similarity). Interacts with WRN (via KBM motif) (By similarity). The XRCC5-XRCC6 dimer associates with ALKBH2. Interacts with TPRN; TPRN interacts with a number of DNA damage response proteins, is recruited to sites of DNA damage and may play a role in DNA damage repair (By similarity). When not acetylated, interacts with BAX (PubMed:15023334). Interacts with ERCC6L2 (PubMed:32355287).</text>
</comment>
<comment type="subcellular location">
    <subcellularLocation>
        <location evidence="2">Nucleus</location>
    </subcellularLocation>
    <subcellularLocation>
        <location evidence="2">Chromosome</location>
    </subcellularLocation>
    <subcellularLocation>
        <location evidence="2">Cytoplasm</location>
    </subcellularLocation>
    <text evidence="2">When trimethylated, localizes in the cytoplasm.</text>
</comment>
<comment type="developmental stage">
    <text evidence="12">Expression increases during promyelocyte differentiation.</text>
</comment>
<comment type="PTM">
    <text evidence="2">Phosphorylation by PRKDC may enhance helicase activity. Phosphorylation of Ser-49 does not affect DNA repair.</text>
</comment>
<comment type="PTM">
    <text evidence="2">ADP-ribosylated by PARP3.</text>
</comment>
<comment type="PTM">
    <text evidence="2">Methylation by SETD4 leads to accumulation in the cytoplasm and is a prerequisite for acetylation, possibly due to the change of subcellular from the nucleus to the cytosol initiated by methylation, acetylation occurring in the cytosol.</text>
</comment>
<comment type="PTM">
    <text evidence="2">Acetylation can be catalyzed in vitro by CREBBP/CBP and KAT2B/PCAF.</text>
</comment>
<comment type="disruption phenotype">
    <text evidence="9">Viable. Reduced number of peripheral lymphocytes, however number of erythrocytes, platelets and neutrophils are normal. Translation levels in erythrocyte precursors are normal.</text>
</comment>
<comment type="similarity">
    <text evidence="13">Belongs to the ku70 family.</text>
</comment>
<accession>P23475</accession>
<accession>O88212</accession>
<accession>Q3UJL8</accession>
<accession>Q62027</accession>
<accession>Q62382</accession>
<accession>Q62453</accession>
<accession>Q6GTV8</accession>
<accession>Q8QZX7</accession>
<feature type="initiator methionine" description="Removed" evidence="2">
    <location>
        <position position="1"/>
    </location>
</feature>
<feature type="chain" id="PRO_0000210180" description="X-ray repair cross-complementing protein 6">
    <location>
        <begin position="2"/>
        <end position="608"/>
    </location>
</feature>
<feature type="domain" description="Ku">
    <location>
        <begin position="259"/>
        <end position="466"/>
    </location>
</feature>
<feature type="domain" description="SAP" evidence="3">
    <location>
        <begin position="571"/>
        <end position="605"/>
    </location>
</feature>
<feature type="region of interest" description="Disordered" evidence="4">
    <location>
        <begin position="1"/>
        <end position="29"/>
    </location>
</feature>
<feature type="region of interest" description="DNA-binding" evidence="2">
    <location>
        <begin position="275"/>
        <end position="339"/>
    </location>
</feature>
<feature type="region of interest" description="Interaction with XRCC5" evidence="2">
    <location>
        <begin position="371"/>
        <end position="480"/>
    </location>
</feature>
<feature type="region of interest" description="Disordered" evidence="4">
    <location>
        <begin position="534"/>
        <end position="557"/>
    </location>
</feature>
<feature type="region of interest" description="Interaction with DEAF1" evidence="1">
    <location>
        <begin position="548"/>
        <end position="607"/>
    </location>
</feature>
<feature type="region of interest" description="Interaction with BAX" evidence="2">
    <location>
        <begin position="576"/>
        <end position="581"/>
    </location>
</feature>
<feature type="compositionally biased region" description="Basic and acidic residues" evidence="4">
    <location>
        <begin position="1"/>
        <end position="11"/>
    </location>
</feature>
<feature type="compositionally biased region" description="Acidic residues" evidence="4">
    <location>
        <begin position="12"/>
        <end position="22"/>
    </location>
</feature>
<feature type="compositionally biased region" description="Basic and acidic residues" evidence="4">
    <location>
        <begin position="537"/>
        <end position="557"/>
    </location>
</feature>
<feature type="active site" description="Schiff-base intermediate with DNA; for 5'-deoxyribose-5-phosphate lyase activity" evidence="1">
    <location>
        <position position="29"/>
    </location>
</feature>
<feature type="modified residue" description="N-acetylserine" evidence="2">
    <location>
        <position position="2"/>
    </location>
</feature>
<feature type="modified residue" description="Phosphoserine" evidence="2">
    <location>
        <position position="2"/>
    </location>
</feature>
<feature type="modified residue" description="Phosphoserine; by PRKDC" evidence="2">
    <location>
        <position position="6"/>
    </location>
</feature>
<feature type="modified residue" description="N6-acetyllysine" evidence="2">
    <location>
        <position position="29"/>
    </location>
</feature>
<feature type="modified residue" description="Phosphoserine; by PRKDC" evidence="2">
    <location>
        <position position="49"/>
    </location>
</feature>
<feature type="modified residue" description="N6-acetyllysine" evidence="2">
    <location>
        <position position="329"/>
    </location>
</feature>
<feature type="modified residue" description="N6-acetyllysine" evidence="2">
    <location>
        <position position="336"/>
    </location>
</feature>
<feature type="modified residue" description="N6-acetyllysine" evidence="2">
    <location>
        <position position="459"/>
    </location>
</feature>
<feature type="modified residue" description="Phosphoserine" evidence="2">
    <location>
        <position position="475"/>
    </location>
</feature>
<feature type="modified residue" description="Phosphoserine" evidence="2">
    <location>
        <position position="518"/>
    </location>
</feature>
<feature type="modified residue" description="Phosphoserine" evidence="2">
    <location>
        <position position="548"/>
    </location>
</feature>
<feature type="modified residue" description="Phosphoserine" evidence="2">
    <location>
        <position position="558"/>
    </location>
</feature>
<feature type="modified residue" description="N6,N6,N6-trimethyllysine" evidence="2">
    <location>
        <position position="568"/>
    </location>
</feature>
<feature type="cross-link" description="Glycyl lysine isopeptide (Lys-Gly) (interchain with G-Cter in SUMO2)" evidence="2">
    <location>
        <position position="315"/>
    </location>
</feature>
<feature type="cross-link" description="Glycyl lysine isopeptide (Lys-Gly) (interchain with G-Cter in SUMO2)" evidence="2">
    <location>
        <position position="554"/>
    </location>
</feature>
<feature type="mutagenesis site" description="No effect on XCRR5 stability; increased sensitivity to staurosporine-induced apoptosis." evidence="11">
    <original>K</original>
    <variation>R</variation>
    <location>
        <position position="568"/>
    </location>
</feature>
<feature type="sequence conflict" description="In Ref. 4; BAE27139/BAE27137/BAE27135." evidence="13" ref="4">
    <original>E</original>
    <variation>G</variation>
    <location>
        <position position="225"/>
    </location>
</feature>
<feature type="sequence conflict" description="In Ref. 3; BAE25441/AAL90775/AAL90774." evidence="13" ref="3">
    <original>K</original>
    <variation>E</variation>
    <location>
        <position position="391"/>
    </location>
</feature>
<feature type="sequence conflict" description="In Ref. 7; AAA39396." evidence="13" ref="7">
    <original>P</original>
    <variation>H</variation>
    <location>
        <position position="400"/>
    </location>
</feature>
<feature type="sequence conflict" description="In Ref. 1; AAC52675 and 7; AAA39396." evidence="13" ref="1 7">
    <original>KL</original>
    <variation>NV</variation>
    <location>
        <begin position="466"/>
        <end position="467"/>
    </location>
</feature>
<proteinExistence type="evidence at protein level"/>